<gene>
    <name type="primary">SULT2A1</name>
    <name type="synonym">STD</name>
</gene>
<comment type="function">
    <text evidence="1 2 3">Sulfotransferase that utilizes 3'-phospho-5'-adenylyl sulfate (PAPS) as sulfonate donor to catalyze the sulfonation of steroids and bile acids in the liver and adrenal glands (PubMed:31100221). Mediates the sulfation of a wide range of steroids and sterols, including pregnenolone, androsterone, DHEA, bile acids, cholesterol and as well many xenobiotics that contain alcohol and phenol functional groups. Sulfonation increases the water solubility of most compounds, and therefore their renal excretion, but it can also result in bioactivation to form active metabolites. Plays an important role in maintening steroid and lipid homeostasis. Plays a key role in bile acid metabolism (By similarity). In addition, catalyzes the metabolic activation of potent carcinogenic polycyclic arylmethanols (By similarity).</text>
</comment>
<comment type="catalytic activity">
    <reaction evidence="3">
        <text>an alcohol + 3'-phosphoadenylyl sulfate = an alkyl sulfate + adenosine 3',5'-bisphosphate + H(+)</text>
        <dbReference type="Rhea" id="RHEA:22552"/>
        <dbReference type="ChEBI" id="CHEBI:15378"/>
        <dbReference type="ChEBI" id="CHEBI:30879"/>
        <dbReference type="ChEBI" id="CHEBI:58339"/>
        <dbReference type="ChEBI" id="CHEBI:58343"/>
        <dbReference type="ChEBI" id="CHEBI:83414"/>
        <dbReference type="EC" id="2.8.2.2"/>
    </reaction>
</comment>
<comment type="catalytic activity">
    <reaction evidence="3">
        <text>3beta-hydroxyandrost-5-en-17-one + 3'-phosphoadenylyl sulfate = dehydroepiandrosterone 3-sulfate + adenosine 3',5'-bisphosphate + H(+)</text>
        <dbReference type="Rhea" id="RHEA:51216"/>
        <dbReference type="ChEBI" id="CHEBI:15378"/>
        <dbReference type="ChEBI" id="CHEBI:28689"/>
        <dbReference type="ChEBI" id="CHEBI:57905"/>
        <dbReference type="ChEBI" id="CHEBI:58339"/>
        <dbReference type="ChEBI" id="CHEBI:58343"/>
    </reaction>
    <physiologicalReaction direction="left-to-right" evidence="5">
        <dbReference type="Rhea" id="RHEA:51217"/>
    </physiologicalReaction>
</comment>
<comment type="catalytic activity">
    <reaction evidence="2">
        <text>taurolithocholate + 3'-phosphoadenylyl sulfate = taurolithocholate 3-sulfate + adenosine 3',5'-bisphosphate + H(+)</text>
        <dbReference type="Rhea" id="RHEA:14013"/>
        <dbReference type="ChEBI" id="CHEBI:15378"/>
        <dbReference type="ChEBI" id="CHEBI:17179"/>
        <dbReference type="ChEBI" id="CHEBI:58301"/>
        <dbReference type="ChEBI" id="CHEBI:58339"/>
        <dbReference type="ChEBI" id="CHEBI:58343"/>
        <dbReference type="EC" id="2.8.2.14"/>
    </reaction>
    <physiologicalReaction direction="left-to-right" evidence="2">
        <dbReference type="Rhea" id="RHEA:14014"/>
    </physiologicalReaction>
</comment>
<comment type="catalytic activity">
    <reaction evidence="2">
        <text>lithocholate + 3'-phosphoadenylyl sulfate = lithocholate sulfate + adenosine 3',5'-bisphosphate + H(+)</text>
        <dbReference type="Rhea" id="RHEA:51064"/>
        <dbReference type="ChEBI" id="CHEBI:15378"/>
        <dbReference type="ChEBI" id="CHEBI:29744"/>
        <dbReference type="ChEBI" id="CHEBI:58339"/>
        <dbReference type="ChEBI" id="CHEBI:58343"/>
        <dbReference type="ChEBI" id="CHEBI:133940"/>
    </reaction>
    <physiologicalReaction direction="left-to-right" evidence="2">
        <dbReference type="Rhea" id="RHEA:51065"/>
    </physiologicalReaction>
</comment>
<comment type="catalytic activity">
    <reaction evidence="2">
        <text>(24S)-hydroxycholesterol + 3'-phosphoadenylyl sulfate = (24S)-hydroxycholesterol 24-sulfate + adenosine 3',5'-bisphosphate + H(+)</text>
        <dbReference type="Rhea" id="RHEA:52344"/>
        <dbReference type="ChEBI" id="CHEBI:15378"/>
        <dbReference type="ChEBI" id="CHEBI:34310"/>
        <dbReference type="ChEBI" id="CHEBI:58339"/>
        <dbReference type="ChEBI" id="CHEBI:58343"/>
        <dbReference type="ChEBI" id="CHEBI:136566"/>
    </reaction>
    <physiologicalReaction direction="left-to-right" evidence="2">
        <dbReference type="Rhea" id="RHEA:52345"/>
    </physiologicalReaction>
</comment>
<comment type="catalytic activity">
    <reaction evidence="2">
        <text>(24S)-hydroxycholesterol + 3'-phosphoadenylyl sulfate = (24S)-hydroxycholesterol 3-sulfate + adenosine 3',5'-bisphosphate + H(+)</text>
        <dbReference type="Rhea" id="RHEA:52348"/>
        <dbReference type="ChEBI" id="CHEBI:15378"/>
        <dbReference type="ChEBI" id="CHEBI:34310"/>
        <dbReference type="ChEBI" id="CHEBI:58339"/>
        <dbReference type="ChEBI" id="CHEBI:58343"/>
        <dbReference type="ChEBI" id="CHEBI:136567"/>
    </reaction>
    <physiologicalReaction direction="left-to-right" evidence="2">
        <dbReference type="Rhea" id="RHEA:52349"/>
    </physiologicalReaction>
</comment>
<comment type="catalytic activity">
    <reaction evidence="2">
        <text>(24S)-hydroxycholesterol 24-sulfate + 3'-phosphoadenylyl sulfate = (24S)-hydroxycholesterol 3,24-disulfate + adenosine 3',5'-bisphosphate + H(+)</text>
        <dbReference type="Rhea" id="RHEA:52352"/>
        <dbReference type="ChEBI" id="CHEBI:15378"/>
        <dbReference type="ChEBI" id="CHEBI:58339"/>
        <dbReference type="ChEBI" id="CHEBI:58343"/>
        <dbReference type="ChEBI" id="CHEBI:136566"/>
        <dbReference type="ChEBI" id="CHEBI:136568"/>
    </reaction>
    <physiologicalReaction direction="left-to-right" evidence="2">
        <dbReference type="Rhea" id="RHEA:52353"/>
    </physiologicalReaction>
</comment>
<comment type="catalytic activity">
    <reaction evidence="2">
        <text>pregnenolone + 3'-phosphoadenylyl sulfate = pregnenolone sulfate + adenosine 3',5'-bisphosphate + H(+)</text>
        <dbReference type="Rhea" id="RHEA:52356"/>
        <dbReference type="ChEBI" id="CHEBI:15378"/>
        <dbReference type="ChEBI" id="CHEBI:16581"/>
        <dbReference type="ChEBI" id="CHEBI:58339"/>
        <dbReference type="ChEBI" id="CHEBI:58343"/>
        <dbReference type="ChEBI" id="CHEBI:133000"/>
    </reaction>
    <physiologicalReaction direction="left-to-right" evidence="2">
        <dbReference type="Rhea" id="RHEA:52357"/>
    </physiologicalReaction>
</comment>
<comment type="catalytic activity">
    <reaction evidence="2">
        <text>androsterone + 3'-phosphoadenylyl sulfate = androsterone 3alpha-sulfate + adenosine 3',5'-bisphosphate + H(+)</text>
        <dbReference type="Rhea" id="RHEA:60644"/>
        <dbReference type="ChEBI" id="CHEBI:15378"/>
        <dbReference type="ChEBI" id="CHEBI:16032"/>
        <dbReference type="ChEBI" id="CHEBI:58339"/>
        <dbReference type="ChEBI" id="CHEBI:58343"/>
        <dbReference type="ChEBI" id="CHEBI:133003"/>
    </reaction>
    <physiologicalReaction direction="left-to-right" evidence="2">
        <dbReference type="Rhea" id="RHEA:60645"/>
    </physiologicalReaction>
</comment>
<comment type="subunit">
    <text evidence="2">Homodimer.</text>
</comment>
<comment type="subcellular location">
    <subcellularLocation>
        <location evidence="3">Cytoplasm</location>
        <location evidence="3">Cytosol</location>
    </subcellularLocation>
</comment>
<comment type="tissue specificity">
    <text evidence="3">Predominanly expressed in liver. Detected also in adrenal gland and in jejunum.</text>
</comment>
<comment type="similarity">
    <text evidence="4">Belongs to the sulfotransferase 1 family.</text>
</comment>
<accession>P52842</accession>
<organism>
    <name type="scientific">Macaca fascicularis</name>
    <name type="common">Crab-eating macaque</name>
    <name type="synonym">Cynomolgus monkey</name>
    <dbReference type="NCBI Taxonomy" id="9541"/>
    <lineage>
        <taxon>Eukaryota</taxon>
        <taxon>Metazoa</taxon>
        <taxon>Chordata</taxon>
        <taxon>Craniata</taxon>
        <taxon>Vertebrata</taxon>
        <taxon>Euteleostomi</taxon>
        <taxon>Mammalia</taxon>
        <taxon>Eutheria</taxon>
        <taxon>Euarchontoglires</taxon>
        <taxon>Primates</taxon>
        <taxon>Haplorrhini</taxon>
        <taxon>Catarrhini</taxon>
        <taxon>Cercopithecidae</taxon>
        <taxon>Cercopithecinae</taxon>
        <taxon>Macaca</taxon>
    </lineage>
</organism>
<dbReference type="EC" id="2.8.2.2" evidence="3"/>
<dbReference type="EC" id="2.8.2.14" evidence="2"/>
<dbReference type="EMBL" id="D85521">
    <property type="protein sequence ID" value="BAA12823.1"/>
    <property type="molecule type" value="mRNA"/>
</dbReference>
<dbReference type="RefSeq" id="NP_001306532.1">
    <property type="nucleotide sequence ID" value="NM_001319603.1"/>
</dbReference>
<dbReference type="SMR" id="P52842"/>
<dbReference type="STRING" id="9541.ENSMFAP00000040315"/>
<dbReference type="GeneID" id="102130325"/>
<dbReference type="KEGG" id="mcf:102130325"/>
<dbReference type="CTD" id="6822"/>
<dbReference type="eggNOG" id="KOG1584">
    <property type="taxonomic scope" value="Eukaryota"/>
</dbReference>
<dbReference type="BRENDA" id="2.8.2.2">
    <property type="organism ID" value="1793"/>
</dbReference>
<dbReference type="Proteomes" id="UP000233100">
    <property type="component" value="Unplaced"/>
</dbReference>
<dbReference type="GO" id="GO:0005829">
    <property type="term" value="C:cytosol"/>
    <property type="evidence" value="ECO:0000314"/>
    <property type="project" value="UniProtKB"/>
</dbReference>
<dbReference type="GO" id="GO:0050656">
    <property type="term" value="F:3'-phosphoadenosine 5'-phosphosulfate binding"/>
    <property type="evidence" value="ECO:0000250"/>
    <property type="project" value="UniProtKB"/>
</dbReference>
<dbReference type="GO" id="GO:0004027">
    <property type="term" value="F:alcohol sulfotransferase activity"/>
    <property type="evidence" value="ECO:0000314"/>
    <property type="project" value="UniProtKB"/>
</dbReference>
<dbReference type="GO" id="GO:0047704">
    <property type="term" value="F:bile-salt sulfotransferase activity"/>
    <property type="evidence" value="ECO:0000250"/>
    <property type="project" value="UniProtKB"/>
</dbReference>
<dbReference type="GO" id="GO:0050294">
    <property type="term" value="F:steroid sulfotransferase activity"/>
    <property type="evidence" value="ECO:0000314"/>
    <property type="project" value="UniProtKB"/>
</dbReference>
<dbReference type="GO" id="GO:0008146">
    <property type="term" value="F:sulfotransferase activity"/>
    <property type="evidence" value="ECO:0000314"/>
    <property type="project" value="UniProtKB"/>
</dbReference>
<dbReference type="GO" id="GO:0030573">
    <property type="term" value="P:bile acid catabolic process"/>
    <property type="evidence" value="ECO:0007669"/>
    <property type="project" value="UniProtKB-KW"/>
</dbReference>
<dbReference type="GO" id="GO:0008203">
    <property type="term" value="P:cholesterol metabolic process"/>
    <property type="evidence" value="ECO:0000250"/>
    <property type="project" value="UniProtKB"/>
</dbReference>
<dbReference type="GO" id="GO:0016042">
    <property type="term" value="P:lipid catabolic process"/>
    <property type="evidence" value="ECO:0007669"/>
    <property type="project" value="UniProtKB-KW"/>
</dbReference>
<dbReference type="GO" id="GO:0008202">
    <property type="term" value="P:steroid metabolic process"/>
    <property type="evidence" value="ECO:0000314"/>
    <property type="project" value="UniProtKB"/>
</dbReference>
<dbReference type="FunFam" id="3.40.50.300:FF:000433">
    <property type="entry name" value="Estrogen sulfotransferase"/>
    <property type="match status" value="1"/>
</dbReference>
<dbReference type="Gene3D" id="3.40.50.300">
    <property type="entry name" value="P-loop containing nucleotide triphosphate hydrolases"/>
    <property type="match status" value="1"/>
</dbReference>
<dbReference type="InterPro" id="IPR027417">
    <property type="entry name" value="P-loop_NTPase"/>
</dbReference>
<dbReference type="InterPro" id="IPR000863">
    <property type="entry name" value="Sulfotransferase_dom"/>
</dbReference>
<dbReference type="PANTHER" id="PTHR11783">
    <property type="entry name" value="SULFOTRANSFERASE SULT"/>
    <property type="match status" value="1"/>
</dbReference>
<dbReference type="Pfam" id="PF00685">
    <property type="entry name" value="Sulfotransfer_1"/>
    <property type="match status" value="1"/>
</dbReference>
<dbReference type="SUPFAM" id="SSF52540">
    <property type="entry name" value="P-loop containing nucleoside triphosphate hydrolases"/>
    <property type="match status" value="1"/>
</dbReference>
<reference key="1">
    <citation type="submission" date="1996-05" db="EMBL/GenBank/DDBJ databases">
        <title>Molecular cloning of monkey liver hydroxysteroid sulfotransferase.</title>
        <authorList>
            <person name="Ogura K."/>
            <person name="Satsukawa M."/>
            <person name="Kato K."/>
            <person name="Okuda H."/>
            <person name="Watabe T."/>
        </authorList>
    </citation>
    <scope>NUCLEOTIDE SEQUENCE [MRNA]</scope>
    <source>
        <tissue>Liver</tissue>
    </source>
</reference>
<reference key="2">
    <citation type="journal article" date="2019" name="Biochem. Pharmacol.">
        <title>Molecular and functional characterization of cytosolic sulfotransferases in cynomolgus macaque.</title>
        <authorList>
            <person name="Uno Y."/>
            <person name="Murayama N."/>
            <person name="Yamazaki H."/>
        </authorList>
    </citation>
    <scope>FUNCTION</scope>
    <scope>CATALYTIC ACTIVITY</scope>
    <scope>TISSUE SPECIFICITY</scope>
    <scope>SUBCELLULAR LOCATION</scope>
</reference>
<feature type="chain" id="PRO_0000085142" description="Sulfotransferase 2A1">
    <location>
        <begin position="1"/>
        <end position="285"/>
    </location>
</feature>
<feature type="active site" description="Proton acceptor" evidence="2">
    <location>
        <position position="99"/>
    </location>
</feature>
<feature type="binding site" evidence="2">
    <location>
        <position position="44"/>
    </location>
    <ligand>
        <name>3'-phosphoadenylyl sulfate</name>
        <dbReference type="ChEBI" id="CHEBI:58339"/>
    </ligand>
</feature>
<feature type="binding site" evidence="2">
    <location>
        <position position="45"/>
    </location>
    <ligand>
        <name>3'-phosphoadenylyl sulfate</name>
        <dbReference type="ChEBI" id="CHEBI:58339"/>
    </ligand>
</feature>
<feature type="binding site" evidence="2">
    <location>
        <position position="46"/>
    </location>
    <ligand>
        <name>3'-phosphoadenylyl sulfate</name>
        <dbReference type="ChEBI" id="CHEBI:58339"/>
    </ligand>
</feature>
<feature type="binding site" evidence="2">
    <location>
        <position position="47"/>
    </location>
    <ligand>
        <name>3'-phosphoadenylyl sulfate</name>
        <dbReference type="ChEBI" id="CHEBI:58339"/>
    </ligand>
</feature>
<feature type="binding site" evidence="2">
    <location>
        <position position="48"/>
    </location>
    <ligand>
        <name>3'-phosphoadenylyl sulfate</name>
        <dbReference type="ChEBI" id="CHEBI:58339"/>
    </ligand>
</feature>
<feature type="binding site" evidence="2">
    <location>
        <position position="49"/>
    </location>
    <ligand>
        <name>3'-phosphoadenylyl sulfate</name>
        <dbReference type="ChEBI" id="CHEBI:58339"/>
    </ligand>
</feature>
<feature type="binding site" evidence="2">
    <location>
        <position position="121"/>
    </location>
    <ligand>
        <name>3'-phosphoadenylyl sulfate</name>
        <dbReference type="ChEBI" id="CHEBI:58339"/>
    </ligand>
</feature>
<feature type="binding site" evidence="2">
    <location>
        <position position="129"/>
    </location>
    <ligand>
        <name>3'-phosphoadenylyl sulfate</name>
        <dbReference type="ChEBI" id="CHEBI:58339"/>
    </ligand>
</feature>
<feature type="binding site" evidence="2">
    <location>
        <position position="184"/>
    </location>
    <ligand>
        <name>3'-phosphoadenylyl sulfate</name>
        <dbReference type="ChEBI" id="CHEBI:58339"/>
    </ligand>
</feature>
<feature type="binding site" evidence="2">
    <location>
        <position position="218"/>
    </location>
    <ligand>
        <name>3'-phosphoadenylyl sulfate</name>
        <dbReference type="ChEBI" id="CHEBI:58339"/>
    </ligand>
</feature>
<feature type="binding site" evidence="2">
    <location>
        <position position="223"/>
    </location>
    <ligand>
        <name>3'-phosphoadenylyl sulfate</name>
        <dbReference type="ChEBI" id="CHEBI:58339"/>
    </ligand>
</feature>
<feature type="binding site" evidence="2">
    <location>
        <position position="247"/>
    </location>
    <ligand>
        <name>3'-phosphoadenylyl sulfate</name>
        <dbReference type="ChEBI" id="CHEBI:58339"/>
    </ligand>
</feature>
<feature type="binding site" evidence="2">
    <location>
        <position position="248"/>
    </location>
    <ligand>
        <name>3'-phosphoadenylyl sulfate</name>
        <dbReference type="ChEBI" id="CHEBI:58339"/>
    </ligand>
</feature>
<feature type="binding site" evidence="2">
    <location>
        <position position="249"/>
    </location>
    <ligand>
        <name>3'-phosphoadenylyl sulfate</name>
        <dbReference type="ChEBI" id="CHEBI:58339"/>
    </ligand>
</feature>
<feature type="modified residue" description="Phosphoserine" evidence="2">
    <location>
        <position position="251"/>
    </location>
</feature>
<name>ST2A1_MACFA</name>
<proteinExistence type="evidence at protein level"/>
<evidence type="ECO:0000250" key="1">
    <source>
        <dbReference type="UniProtKB" id="P15709"/>
    </source>
</evidence>
<evidence type="ECO:0000250" key="2">
    <source>
        <dbReference type="UniProtKB" id="Q06520"/>
    </source>
</evidence>
<evidence type="ECO:0000269" key="3">
    <source>
    </source>
</evidence>
<evidence type="ECO:0000305" key="4"/>
<evidence type="ECO:0000305" key="5">
    <source>
    </source>
</evidence>
<keyword id="KW-0088">Bile acid catabolism</keyword>
<keyword id="KW-0963">Cytoplasm</keyword>
<keyword id="KW-0442">Lipid degradation</keyword>
<keyword id="KW-0443">Lipid metabolism</keyword>
<keyword id="KW-0597">Phosphoprotein</keyword>
<keyword id="KW-1185">Reference proteome</keyword>
<keyword id="KW-0753">Steroid metabolism</keyword>
<keyword id="KW-0808">Transferase</keyword>
<protein>
    <recommendedName>
        <fullName>Sulfotransferase 2A1</fullName>
        <shortName>ST2A1</shortName>
        <ecNumber evidence="3">2.8.2.2</ecNumber>
    </recommendedName>
    <alternativeName>
        <fullName>Bile salt sulfotransferase</fullName>
        <ecNumber evidence="2">2.8.2.14</ecNumber>
    </alternativeName>
    <alternativeName>
        <fullName>Hydroxysteroid sulfotransferase</fullName>
        <shortName>HST</shortName>
    </alternativeName>
</protein>
<sequence length="285" mass="33920">MSDDFLWFEGIAFPNMGFRSETLRKVRDEFVIKDEDVIILTYPKSGTNWLIEILCLIHSNGDPKWIQSVPIWERSPWVETEMGYKLLSEEEGPRLFSSHLPIQLFPKSFFSSKAKVIYLMRNPRDVFVSGYFFWNSVKFVKKPKSWQQYFEWFCQGNVIYGSWFDHIHGWMPMREKKNFLLLSYEELKQDTRRTVEKICQFLGKTLEPEELNLILKNSSFQSMKENKMSNFSLLSVDFVEEKAQLLRKGISGDWKNHLTVAQAEAFDKLFQEKMTDLPRELFPWE</sequence>